<protein>
    <recommendedName>
        <fullName evidence="1">Pyrokinin-5</fullName>
    </recommendedName>
    <alternativeName>
        <fullName evidence="1">FXPRL-amide</fullName>
    </alternativeName>
    <alternativeName>
        <fullName evidence="4">PanS2-Capa-PK</fullName>
    </alternativeName>
</protein>
<name>PPK5_PANSB</name>
<dbReference type="GO" id="GO:0005576">
    <property type="term" value="C:extracellular region"/>
    <property type="evidence" value="ECO:0007669"/>
    <property type="project" value="UniProtKB-SubCell"/>
</dbReference>
<dbReference type="GO" id="GO:0005184">
    <property type="term" value="F:neuropeptide hormone activity"/>
    <property type="evidence" value="ECO:0007669"/>
    <property type="project" value="InterPro"/>
</dbReference>
<dbReference type="GO" id="GO:0007218">
    <property type="term" value="P:neuropeptide signaling pathway"/>
    <property type="evidence" value="ECO:0007669"/>
    <property type="project" value="UniProtKB-KW"/>
</dbReference>
<dbReference type="InterPro" id="IPR001484">
    <property type="entry name" value="Pyrokinin_CS"/>
</dbReference>
<dbReference type="PROSITE" id="PS00539">
    <property type="entry name" value="PYROKININ"/>
    <property type="match status" value="1"/>
</dbReference>
<organism>
    <name type="scientific">Panesthia sp. (strain BF-2008)</name>
    <name type="common">Cockroach</name>
    <dbReference type="NCBI Taxonomy" id="521518"/>
    <lineage>
        <taxon>Eukaryota</taxon>
        <taxon>Metazoa</taxon>
        <taxon>Ecdysozoa</taxon>
        <taxon>Arthropoda</taxon>
        <taxon>Hexapoda</taxon>
        <taxon>Insecta</taxon>
        <taxon>Pterygota</taxon>
        <taxon>Neoptera</taxon>
        <taxon>Polyneoptera</taxon>
        <taxon>Dictyoptera</taxon>
        <taxon>Blattodea</taxon>
        <taxon>Blaberoidea</taxon>
        <taxon>Blaberidae</taxon>
        <taxon>Panesthiinae</taxon>
        <taxon>Panesthia</taxon>
    </lineage>
</organism>
<feature type="peptide" id="PRO_0000378707" description="Pyrokinin-5" evidence="3">
    <location>
        <begin position="1"/>
        <end position="17"/>
    </location>
</feature>
<feature type="modified residue" description="Leucine amide" evidence="3">
    <location>
        <position position="17"/>
    </location>
</feature>
<reference evidence="5" key="1">
    <citation type="journal article" date="2009" name="BMC Evol. Biol.">
        <title>A proteomic approach for studying insect phylogeny: CAPA peptides of ancient insect taxa (Dictyoptera, Blattoptera) as a test case.</title>
        <authorList>
            <person name="Roth S."/>
            <person name="Fromm B."/>
            <person name="Gaede G."/>
            <person name="Predel R."/>
        </authorList>
    </citation>
    <scope>PROTEIN SEQUENCE</scope>
    <scope>AMIDATION AT LEU-17</scope>
    <source>
        <tissue evidence="3">Abdominal perisympathetic organs</tissue>
    </source>
</reference>
<evidence type="ECO:0000250" key="1">
    <source>
        <dbReference type="UniProtKB" id="P82617"/>
    </source>
</evidence>
<evidence type="ECO:0000255" key="2"/>
<evidence type="ECO:0000269" key="3">
    <source>
    </source>
</evidence>
<evidence type="ECO:0000303" key="4">
    <source>
    </source>
</evidence>
<evidence type="ECO:0000305" key="5"/>
<sequence>GGETSGEGKGMWFGPRL</sequence>
<proteinExistence type="evidence at protein level"/>
<accession>P85690</accession>
<keyword id="KW-0027">Amidation</keyword>
<keyword id="KW-0903">Direct protein sequencing</keyword>
<keyword id="KW-0527">Neuropeptide</keyword>
<keyword id="KW-0964">Secreted</keyword>
<comment type="function">
    <text evidence="1">Myoactive.</text>
</comment>
<comment type="subcellular location">
    <subcellularLocation>
        <location evidence="5">Secreted</location>
    </subcellularLocation>
</comment>
<comment type="similarity">
    <text evidence="2">Belongs to the pyrokinin family.</text>
</comment>